<feature type="chain" id="PRO_0000214962" description="UPF0154 protein YnbE">
    <location>
        <begin position="1"/>
        <end position="79"/>
    </location>
</feature>
<feature type="transmembrane region" description="Helical" evidence="1">
    <location>
        <begin position="4"/>
        <end position="24"/>
    </location>
</feature>
<proteinExistence type="inferred from homology"/>
<sequence>MNLILAILLMVVCLLAGFFLGTWFSQRQTKKLLMDNPPLNEDAVRLMMGSMGRKPSEVQVQQVLRQIRAAAKQSDTNKK</sequence>
<gene>
    <name type="primary">ynbE</name>
    <name type="ordered locus">LL1283</name>
    <name type="ORF">L113060</name>
</gene>
<dbReference type="EMBL" id="AE005176">
    <property type="protein sequence ID" value="AAK05381.1"/>
    <property type="molecule type" value="Genomic_DNA"/>
</dbReference>
<dbReference type="PIR" id="C86785">
    <property type="entry name" value="C86785"/>
</dbReference>
<dbReference type="RefSeq" id="NP_267439.1">
    <property type="nucleotide sequence ID" value="NC_002662.1"/>
</dbReference>
<dbReference type="RefSeq" id="WP_003130191.1">
    <property type="nucleotide sequence ID" value="NC_002662.1"/>
</dbReference>
<dbReference type="SMR" id="Q9CG27"/>
<dbReference type="PaxDb" id="272623-L113060"/>
<dbReference type="EnsemblBacteria" id="AAK05381">
    <property type="protein sequence ID" value="AAK05381"/>
    <property type="gene ID" value="L113060"/>
</dbReference>
<dbReference type="KEGG" id="lla:L113060"/>
<dbReference type="PATRIC" id="fig|272623.7.peg.1386"/>
<dbReference type="eggNOG" id="COG3763">
    <property type="taxonomic scope" value="Bacteria"/>
</dbReference>
<dbReference type="HOGENOM" id="CLU_180108_0_1_9"/>
<dbReference type="OrthoDB" id="1769076at2"/>
<dbReference type="Proteomes" id="UP000002196">
    <property type="component" value="Chromosome"/>
</dbReference>
<dbReference type="GO" id="GO:0005886">
    <property type="term" value="C:plasma membrane"/>
    <property type="evidence" value="ECO:0007669"/>
    <property type="project" value="UniProtKB-UniRule"/>
</dbReference>
<dbReference type="HAMAP" id="MF_00363">
    <property type="entry name" value="UPF0154"/>
    <property type="match status" value="1"/>
</dbReference>
<dbReference type="InterPro" id="IPR005359">
    <property type="entry name" value="UPF0154"/>
</dbReference>
<dbReference type="Pfam" id="PF03672">
    <property type="entry name" value="UPF0154"/>
    <property type="match status" value="1"/>
</dbReference>
<protein>
    <recommendedName>
        <fullName>UPF0154 protein YnbE</fullName>
    </recommendedName>
</protein>
<name>YNBE_LACLA</name>
<evidence type="ECO:0000255" key="1"/>
<evidence type="ECO:0000305" key="2"/>
<keyword id="KW-0472">Membrane</keyword>
<keyword id="KW-1185">Reference proteome</keyword>
<keyword id="KW-0812">Transmembrane</keyword>
<keyword id="KW-1133">Transmembrane helix</keyword>
<organism>
    <name type="scientific">Lactococcus lactis subsp. lactis (strain IL1403)</name>
    <name type="common">Streptococcus lactis</name>
    <dbReference type="NCBI Taxonomy" id="272623"/>
    <lineage>
        <taxon>Bacteria</taxon>
        <taxon>Bacillati</taxon>
        <taxon>Bacillota</taxon>
        <taxon>Bacilli</taxon>
        <taxon>Lactobacillales</taxon>
        <taxon>Streptococcaceae</taxon>
        <taxon>Lactococcus</taxon>
    </lineage>
</organism>
<reference key="1">
    <citation type="journal article" date="2001" name="Genome Res.">
        <title>The complete genome sequence of the lactic acid bacterium Lactococcus lactis ssp. lactis IL1403.</title>
        <authorList>
            <person name="Bolotin A."/>
            <person name="Wincker P."/>
            <person name="Mauger S."/>
            <person name="Jaillon O."/>
            <person name="Malarme K."/>
            <person name="Weissenbach J."/>
            <person name="Ehrlich S.D."/>
            <person name="Sorokin A."/>
        </authorList>
    </citation>
    <scope>NUCLEOTIDE SEQUENCE [LARGE SCALE GENOMIC DNA]</scope>
    <source>
        <strain>IL1403</strain>
    </source>
</reference>
<comment type="subcellular location">
    <subcellularLocation>
        <location evidence="2">Membrane</location>
        <topology evidence="2">Single-pass membrane protein</topology>
    </subcellularLocation>
</comment>
<comment type="similarity">
    <text evidence="2">Belongs to the UPF0154 family.</text>
</comment>
<accession>Q9CG27</accession>